<feature type="chain" id="PRO_0000049138" description="Homeobox protein AHox1">
    <location>
        <begin position="1"/>
        <end position="741"/>
    </location>
</feature>
<feature type="DNA-binding region" description="Homeobox" evidence="1">
    <location>
        <begin position="645"/>
        <end position="704"/>
    </location>
</feature>
<feature type="region of interest" description="Disordered" evidence="2">
    <location>
        <begin position="1"/>
        <end position="30"/>
    </location>
</feature>
<feature type="region of interest" description="Disordered" evidence="2">
    <location>
        <begin position="61"/>
        <end position="96"/>
    </location>
</feature>
<feature type="region of interest" description="Disordered" evidence="2">
    <location>
        <begin position="146"/>
        <end position="183"/>
    </location>
</feature>
<feature type="region of interest" description="Disordered" evidence="2">
    <location>
        <begin position="203"/>
        <end position="226"/>
    </location>
</feature>
<feature type="region of interest" description="Disordered" evidence="2">
    <location>
        <begin position="357"/>
        <end position="383"/>
    </location>
</feature>
<feature type="region of interest" description="Disordered" evidence="2">
    <location>
        <begin position="476"/>
        <end position="501"/>
    </location>
</feature>
<feature type="region of interest" description="Disordered" evidence="2">
    <location>
        <begin position="616"/>
        <end position="642"/>
    </location>
</feature>
<feature type="region of interest" description="Disordered" evidence="2">
    <location>
        <begin position="722"/>
        <end position="741"/>
    </location>
</feature>
<feature type="compositionally biased region" description="Low complexity" evidence="2">
    <location>
        <begin position="7"/>
        <end position="19"/>
    </location>
</feature>
<feature type="compositionally biased region" description="Basic and acidic residues" evidence="2">
    <location>
        <begin position="63"/>
        <end position="78"/>
    </location>
</feature>
<feature type="compositionally biased region" description="Polar residues" evidence="2">
    <location>
        <begin position="79"/>
        <end position="92"/>
    </location>
</feature>
<feature type="compositionally biased region" description="Low complexity" evidence="2">
    <location>
        <begin position="169"/>
        <end position="181"/>
    </location>
</feature>
<feature type="compositionally biased region" description="Polar residues" evidence="2">
    <location>
        <begin position="363"/>
        <end position="375"/>
    </location>
</feature>
<feature type="compositionally biased region" description="Polar residues" evidence="2">
    <location>
        <begin position="616"/>
        <end position="629"/>
    </location>
</feature>
<feature type="compositionally biased region" description="Basic and acidic residues" evidence="2">
    <location>
        <begin position="630"/>
        <end position="639"/>
    </location>
</feature>
<reference key="1">
    <citation type="journal article" date="1991" name="Development">
        <title>Molecular cloning and expression of a novel homeobox gene AHox1 of the ascidian, Halocynthia roretzi.</title>
        <authorList>
            <person name="Saiga H."/>
            <person name="Mizokami A."/>
            <person name="Makabe K.W."/>
            <person name="Satoh N."/>
            <person name="Mita T."/>
        </authorList>
    </citation>
    <scope>NUCLEOTIDE SEQUENCE [GENOMIC DNA]</scope>
</reference>
<accession>P28468</accession>
<gene>
    <name type="primary">AHOX1</name>
</gene>
<name>HOX1_HALRO</name>
<keyword id="KW-0217">Developmental protein</keyword>
<keyword id="KW-0238">DNA-binding</keyword>
<keyword id="KW-0371">Homeobox</keyword>
<keyword id="KW-0539">Nucleus</keyword>
<dbReference type="EMBL" id="X58996">
    <property type="protein sequence ID" value="CAA41742.1"/>
    <property type="molecule type" value="Genomic_DNA"/>
</dbReference>
<dbReference type="PIR" id="JS0606">
    <property type="entry name" value="JS0606"/>
</dbReference>
<dbReference type="SMR" id="P28468"/>
<dbReference type="GO" id="GO:0005634">
    <property type="term" value="C:nucleus"/>
    <property type="evidence" value="ECO:0007669"/>
    <property type="project" value="UniProtKB-SubCell"/>
</dbReference>
<dbReference type="GO" id="GO:0000981">
    <property type="term" value="F:DNA-binding transcription factor activity, RNA polymerase II-specific"/>
    <property type="evidence" value="ECO:0007669"/>
    <property type="project" value="InterPro"/>
</dbReference>
<dbReference type="GO" id="GO:0043565">
    <property type="term" value="F:sequence-specific DNA binding"/>
    <property type="evidence" value="ECO:0007669"/>
    <property type="project" value="TreeGrafter"/>
</dbReference>
<dbReference type="CDD" id="cd00086">
    <property type="entry name" value="homeodomain"/>
    <property type="match status" value="1"/>
</dbReference>
<dbReference type="Gene3D" id="1.10.10.60">
    <property type="entry name" value="Homeodomain-like"/>
    <property type="match status" value="1"/>
</dbReference>
<dbReference type="InterPro" id="IPR052497">
    <property type="entry name" value="H2.0_Homeobox_TF"/>
</dbReference>
<dbReference type="InterPro" id="IPR001356">
    <property type="entry name" value="HD"/>
</dbReference>
<dbReference type="InterPro" id="IPR020479">
    <property type="entry name" value="HD_metazoa"/>
</dbReference>
<dbReference type="InterPro" id="IPR017970">
    <property type="entry name" value="Homeobox_CS"/>
</dbReference>
<dbReference type="InterPro" id="IPR009057">
    <property type="entry name" value="Homeodomain-like_sf"/>
</dbReference>
<dbReference type="PANTHER" id="PTHR46808">
    <property type="entry name" value="H2.0-LIKE HOMEOBOX PROTEIN"/>
    <property type="match status" value="1"/>
</dbReference>
<dbReference type="PANTHER" id="PTHR46808:SF1">
    <property type="entry name" value="H2.0-LIKE HOMEOBOX PROTEIN"/>
    <property type="match status" value="1"/>
</dbReference>
<dbReference type="Pfam" id="PF00046">
    <property type="entry name" value="Homeodomain"/>
    <property type="match status" value="1"/>
</dbReference>
<dbReference type="PRINTS" id="PR00024">
    <property type="entry name" value="HOMEOBOX"/>
</dbReference>
<dbReference type="SMART" id="SM00389">
    <property type="entry name" value="HOX"/>
    <property type="match status" value="1"/>
</dbReference>
<dbReference type="SUPFAM" id="SSF46689">
    <property type="entry name" value="Homeodomain-like"/>
    <property type="match status" value="1"/>
</dbReference>
<dbReference type="PROSITE" id="PS00027">
    <property type="entry name" value="HOMEOBOX_1"/>
    <property type="match status" value="1"/>
</dbReference>
<dbReference type="PROSITE" id="PS50071">
    <property type="entry name" value="HOMEOBOX_2"/>
    <property type="match status" value="1"/>
</dbReference>
<sequence length="741" mass="84777">MEKMHSKSVSPVPFNNSNNTSLGGLRKSSSIPTLAVPECESMGNKHIEEERTNNITTMAMKRRLLDPQNKKKQNRFERYSSSNHAQEQSSEENFCRSKKDSTVLKFGIDSILKNKNAEKVPKGISNAGRIQDERFTEACTNTSSNVNPLSKYFKPSSNDQLGARRTATSFSSSSEASDSKSCCTNNNEEARYKYRVIDKRKSADSDWSEDATGNEADDPDDHINQDNCDLASTLEQSRIVALEILKNKRLRLDSSEALNDLTPYDQLSRTEDQQISRRVEMMNHQAFARENNEWPRSFSSGLQDPFAKNLPNAFLPFYMQPYLRAYYNIQKYIYHKKLLNRNDRFYREANVENDNYKTEESLRSPSETKQYSPDASTFYPIRTEDSNGSRNLKVDVEEGDKEANKLFKDLCVSVGDRLSNALSYGRKDYNGLSTSQTSGNRFLNFSDKGIQAGSYYQTGERNDSLAGPLKNSGMSFDFPPKFGSNNSSTDKPEQEDNNPQTIGSEYQINTQRSMKDNLLTAKLLENEAKLRYGNIVTQYPRPFSWPFAASVRKSYDPALRSYFSRFNNSDAPHYGAAQVNPTAGNNFKSMLPGNFENPYFFNELNTLDTTGFLSRQYGHMSSSQNPHSETQNRSEEVRGTVKKRRKWNRAVFSLMQRRGLEKSFQSQKYVAKPERRKLADALSLTDAQVKIWFQNRRMKWRQEIKMKNRGLVPVHILGQDHEIEKEKTQTPSDEGEVINVD</sequence>
<evidence type="ECO:0000255" key="1">
    <source>
        <dbReference type="PROSITE-ProRule" id="PRU00108"/>
    </source>
</evidence>
<evidence type="ECO:0000256" key="2">
    <source>
        <dbReference type="SAM" id="MobiDB-lite"/>
    </source>
</evidence>
<evidence type="ECO:0000305" key="3"/>
<organism>
    <name type="scientific">Halocynthia roretzi</name>
    <name type="common">Sea squirt</name>
    <name type="synonym">Cynthia roretzi</name>
    <dbReference type="NCBI Taxonomy" id="7729"/>
    <lineage>
        <taxon>Eukaryota</taxon>
        <taxon>Metazoa</taxon>
        <taxon>Chordata</taxon>
        <taxon>Tunicata</taxon>
        <taxon>Ascidiacea</taxon>
        <taxon>Stolidobranchia</taxon>
        <taxon>Pyuridae</taxon>
        <taxon>Halocynthia</taxon>
    </lineage>
</organism>
<proteinExistence type="evidence at transcript level"/>
<comment type="subcellular location">
    <subcellularLocation>
        <location evidence="3">Nucleus</location>
    </subcellularLocation>
</comment>
<comment type="tissue specificity">
    <text>Expressed in the tissues of endodermal origin.</text>
</comment>
<comment type="developmental stage">
    <text>Associated with differentiation of the endodermal tissues.</text>
</comment>
<comment type="similarity">
    <text evidence="3">Belongs to the H2.0 homeobox family.</text>
</comment>
<protein>
    <recommendedName>
        <fullName>Homeobox protein AHox1</fullName>
    </recommendedName>
</protein>